<evidence type="ECO:0000255" key="1">
    <source>
        <dbReference type="HAMAP-Rule" id="MF_00344"/>
    </source>
</evidence>
<reference key="1">
    <citation type="journal article" date="2006" name="Mol. Microbiol.">
        <title>Role of pathogenicity island-associated integrases in the genome plasticity of uropathogenic Escherichia coli strain 536.</title>
        <authorList>
            <person name="Hochhut B."/>
            <person name="Wilde C."/>
            <person name="Balling G."/>
            <person name="Middendorf B."/>
            <person name="Dobrindt U."/>
            <person name="Brzuszkiewicz E."/>
            <person name="Gottschalk G."/>
            <person name="Carniel E."/>
            <person name="Hacker J."/>
        </authorList>
    </citation>
    <scope>NUCLEOTIDE SEQUENCE [LARGE SCALE GENOMIC DNA]</scope>
    <source>
        <strain>536 / UPEC</strain>
    </source>
</reference>
<organism>
    <name type="scientific">Escherichia coli O6:K15:H31 (strain 536 / UPEC)</name>
    <dbReference type="NCBI Taxonomy" id="362663"/>
    <lineage>
        <taxon>Bacteria</taxon>
        <taxon>Pseudomonadati</taxon>
        <taxon>Pseudomonadota</taxon>
        <taxon>Gammaproteobacteria</taxon>
        <taxon>Enterobacterales</taxon>
        <taxon>Enterobacteriaceae</taxon>
        <taxon>Escherichia</taxon>
    </lineage>
</organism>
<keyword id="KW-0067">ATP-binding</keyword>
<keyword id="KW-0315">Glutamine amidotransferase</keyword>
<keyword id="KW-0332">GMP biosynthesis</keyword>
<keyword id="KW-0436">Ligase</keyword>
<keyword id="KW-0547">Nucleotide-binding</keyword>
<keyword id="KW-0658">Purine biosynthesis</keyword>
<sequence length="525" mass="58665">MTENIHKHRILILDFGSQYTQLVARRVRELGVYCELWAWDVTEAQIRDFNPSGIILSGGPESTTEENSPRAPQYVFEAGVPVFGVCYGMQTMAMQLGGHVEASNEREFGYAQVEVVNDSALVRGIEDALTADGKPLLDVWMSHGDKVTAIPSDFVTVASTESCPFAIMANEEKRFYGVQFHPEVTHTRQGMRMLERFVRDICQCEALWTPAKIIDDAVARIREQVGDDKVILGLSGGVDSSVTAMLLHRAIGKNLTCVFVDNGLLRLNEAEQVLDMFGDHFGLNIVHVPAEDRFLSALAGENDPEAKRKIIGRVFVEVFDEEALKLEDVKWLAQGTIYPDVIESAASATGKAHVIKSHHNVGGLPKEMKMGLVEPLKELFKDEVRKIGLELGLPYDMLYRHPFPGPGLGVRVLGEVKKEYCDLLRRADAIFIEELRKADLYDKVSQAFTVFLPVRSVGVMGDGRKYDWVVSLRAVETIDFMTAHWAHLPYDFLGRVSNRIINEVNGISRVVYDISGKPPATIEWE</sequence>
<gene>
    <name evidence="1" type="primary">guaA</name>
    <name type="ordered locus">ECP_2509</name>
</gene>
<comment type="function">
    <text evidence="1">Catalyzes the synthesis of GMP from XMP.</text>
</comment>
<comment type="catalytic activity">
    <reaction evidence="1">
        <text>XMP + L-glutamine + ATP + H2O = GMP + L-glutamate + AMP + diphosphate + 2 H(+)</text>
        <dbReference type="Rhea" id="RHEA:11680"/>
        <dbReference type="ChEBI" id="CHEBI:15377"/>
        <dbReference type="ChEBI" id="CHEBI:15378"/>
        <dbReference type="ChEBI" id="CHEBI:29985"/>
        <dbReference type="ChEBI" id="CHEBI:30616"/>
        <dbReference type="ChEBI" id="CHEBI:33019"/>
        <dbReference type="ChEBI" id="CHEBI:57464"/>
        <dbReference type="ChEBI" id="CHEBI:58115"/>
        <dbReference type="ChEBI" id="CHEBI:58359"/>
        <dbReference type="ChEBI" id="CHEBI:456215"/>
        <dbReference type="EC" id="6.3.5.2"/>
    </reaction>
</comment>
<comment type="pathway">
    <text evidence="1">Purine metabolism; GMP biosynthesis; GMP from XMP (L-Gln route): step 1/1.</text>
</comment>
<comment type="subunit">
    <text evidence="1">Homodimer.</text>
</comment>
<proteinExistence type="inferred from homology"/>
<feature type="chain" id="PRO_1000120286" description="GMP synthase [glutamine-hydrolyzing]">
    <location>
        <begin position="1"/>
        <end position="525"/>
    </location>
</feature>
<feature type="domain" description="Glutamine amidotransferase type-1" evidence="1">
    <location>
        <begin position="9"/>
        <end position="207"/>
    </location>
</feature>
<feature type="domain" description="GMPS ATP-PPase" evidence="1">
    <location>
        <begin position="208"/>
        <end position="400"/>
    </location>
</feature>
<feature type="active site" description="Nucleophile" evidence="1">
    <location>
        <position position="86"/>
    </location>
</feature>
<feature type="active site" evidence="1">
    <location>
        <position position="181"/>
    </location>
</feature>
<feature type="active site" evidence="1">
    <location>
        <position position="183"/>
    </location>
</feature>
<feature type="binding site" evidence="1">
    <location>
        <begin position="235"/>
        <end position="241"/>
    </location>
    <ligand>
        <name>ATP</name>
        <dbReference type="ChEBI" id="CHEBI:30616"/>
    </ligand>
</feature>
<name>GUAA_ECOL5</name>
<protein>
    <recommendedName>
        <fullName evidence="1">GMP synthase [glutamine-hydrolyzing]</fullName>
        <ecNumber evidence="1">6.3.5.2</ecNumber>
    </recommendedName>
    <alternativeName>
        <fullName evidence="1">GMP synthetase</fullName>
    </alternativeName>
    <alternativeName>
        <fullName evidence="1">Glutamine amidotransferase</fullName>
    </alternativeName>
</protein>
<accession>Q0TEY1</accession>
<dbReference type="EC" id="6.3.5.2" evidence="1"/>
<dbReference type="EMBL" id="CP000247">
    <property type="protein sequence ID" value="ABG70498.1"/>
    <property type="molecule type" value="Genomic_DNA"/>
</dbReference>
<dbReference type="RefSeq" id="WP_000138282.1">
    <property type="nucleotide sequence ID" value="NC_008253.1"/>
</dbReference>
<dbReference type="SMR" id="Q0TEY1"/>
<dbReference type="MEROPS" id="C26.957"/>
<dbReference type="GeneID" id="75172615"/>
<dbReference type="KEGG" id="ecp:ECP_2509"/>
<dbReference type="HOGENOM" id="CLU_014340_0_5_6"/>
<dbReference type="UniPathway" id="UPA00189">
    <property type="reaction ID" value="UER00296"/>
</dbReference>
<dbReference type="Proteomes" id="UP000009182">
    <property type="component" value="Chromosome"/>
</dbReference>
<dbReference type="GO" id="GO:0005829">
    <property type="term" value="C:cytosol"/>
    <property type="evidence" value="ECO:0007669"/>
    <property type="project" value="TreeGrafter"/>
</dbReference>
<dbReference type="GO" id="GO:0005524">
    <property type="term" value="F:ATP binding"/>
    <property type="evidence" value="ECO:0007669"/>
    <property type="project" value="UniProtKB-UniRule"/>
</dbReference>
<dbReference type="GO" id="GO:0003921">
    <property type="term" value="F:GMP synthase activity"/>
    <property type="evidence" value="ECO:0007669"/>
    <property type="project" value="InterPro"/>
</dbReference>
<dbReference type="CDD" id="cd01742">
    <property type="entry name" value="GATase1_GMP_Synthase"/>
    <property type="match status" value="1"/>
</dbReference>
<dbReference type="CDD" id="cd01997">
    <property type="entry name" value="GMP_synthase_C"/>
    <property type="match status" value="1"/>
</dbReference>
<dbReference type="FunFam" id="3.30.300.10:FF:000002">
    <property type="entry name" value="GMP synthase [glutamine-hydrolyzing]"/>
    <property type="match status" value="1"/>
</dbReference>
<dbReference type="FunFam" id="3.40.50.620:FF:000001">
    <property type="entry name" value="GMP synthase [glutamine-hydrolyzing]"/>
    <property type="match status" value="1"/>
</dbReference>
<dbReference type="FunFam" id="3.40.50.880:FF:000001">
    <property type="entry name" value="GMP synthase [glutamine-hydrolyzing]"/>
    <property type="match status" value="1"/>
</dbReference>
<dbReference type="Gene3D" id="3.30.300.10">
    <property type="match status" value="1"/>
</dbReference>
<dbReference type="Gene3D" id="3.40.50.880">
    <property type="match status" value="1"/>
</dbReference>
<dbReference type="Gene3D" id="3.40.50.620">
    <property type="entry name" value="HUPs"/>
    <property type="match status" value="1"/>
</dbReference>
<dbReference type="HAMAP" id="MF_00344">
    <property type="entry name" value="GMP_synthase"/>
    <property type="match status" value="1"/>
</dbReference>
<dbReference type="InterPro" id="IPR029062">
    <property type="entry name" value="Class_I_gatase-like"/>
</dbReference>
<dbReference type="InterPro" id="IPR017926">
    <property type="entry name" value="GATASE"/>
</dbReference>
<dbReference type="InterPro" id="IPR001674">
    <property type="entry name" value="GMP_synth_C"/>
</dbReference>
<dbReference type="InterPro" id="IPR004739">
    <property type="entry name" value="GMP_synth_GATase"/>
</dbReference>
<dbReference type="InterPro" id="IPR022955">
    <property type="entry name" value="GMP_synthase"/>
</dbReference>
<dbReference type="InterPro" id="IPR025777">
    <property type="entry name" value="GMPS_ATP_PPase_dom"/>
</dbReference>
<dbReference type="InterPro" id="IPR022310">
    <property type="entry name" value="NAD/GMP_synthase"/>
</dbReference>
<dbReference type="InterPro" id="IPR014729">
    <property type="entry name" value="Rossmann-like_a/b/a_fold"/>
</dbReference>
<dbReference type="NCBIfam" id="TIGR00884">
    <property type="entry name" value="guaA_Cterm"/>
    <property type="match status" value="1"/>
</dbReference>
<dbReference type="NCBIfam" id="TIGR00888">
    <property type="entry name" value="guaA_Nterm"/>
    <property type="match status" value="1"/>
</dbReference>
<dbReference type="NCBIfam" id="NF000848">
    <property type="entry name" value="PRK00074.1"/>
    <property type="match status" value="1"/>
</dbReference>
<dbReference type="PANTHER" id="PTHR11922:SF2">
    <property type="entry name" value="GMP SYNTHASE [GLUTAMINE-HYDROLYZING]"/>
    <property type="match status" value="1"/>
</dbReference>
<dbReference type="PANTHER" id="PTHR11922">
    <property type="entry name" value="GMP SYNTHASE-RELATED"/>
    <property type="match status" value="1"/>
</dbReference>
<dbReference type="Pfam" id="PF00117">
    <property type="entry name" value="GATase"/>
    <property type="match status" value="1"/>
</dbReference>
<dbReference type="Pfam" id="PF00958">
    <property type="entry name" value="GMP_synt_C"/>
    <property type="match status" value="1"/>
</dbReference>
<dbReference type="Pfam" id="PF02540">
    <property type="entry name" value="NAD_synthase"/>
    <property type="match status" value="1"/>
</dbReference>
<dbReference type="PRINTS" id="PR00097">
    <property type="entry name" value="ANTSNTHASEII"/>
</dbReference>
<dbReference type="PRINTS" id="PR00099">
    <property type="entry name" value="CPSGATASE"/>
</dbReference>
<dbReference type="PRINTS" id="PR00096">
    <property type="entry name" value="GATASE"/>
</dbReference>
<dbReference type="SUPFAM" id="SSF52402">
    <property type="entry name" value="Adenine nucleotide alpha hydrolases-like"/>
    <property type="match status" value="1"/>
</dbReference>
<dbReference type="SUPFAM" id="SSF52317">
    <property type="entry name" value="Class I glutamine amidotransferase-like"/>
    <property type="match status" value="1"/>
</dbReference>
<dbReference type="SUPFAM" id="SSF54810">
    <property type="entry name" value="GMP synthetase C-terminal dimerisation domain"/>
    <property type="match status" value="1"/>
</dbReference>
<dbReference type="PROSITE" id="PS51273">
    <property type="entry name" value="GATASE_TYPE_1"/>
    <property type="match status" value="1"/>
</dbReference>
<dbReference type="PROSITE" id="PS51553">
    <property type="entry name" value="GMPS_ATP_PPASE"/>
    <property type="match status" value="1"/>
</dbReference>